<sequence length="109" mass="11613">MMGGRGTGGKWPSAFGLLLLWGVAASALPLESGPTGQDSVQEATEGRSGLLTFLAWWHEWASQASSSTPVGGGTPGLSKSQERPPPQQPPHLDKKPCKNFFWKTFSSCK</sequence>
<protein>
    <recommendedName>
        <fullName>Cortistatin</fullName>
    </recommendedName>
    <component>
        <recommendedName>
            <fullName>Cortistatin-14</fullName>
        </recommendedName>
    </component>
</protein>
<feature type="signal peptide" evidence="2">
    <location>
        <begin position="1"/>
        <end position="25"/>
    </location>
</feature>
<feature type="propeptide" id="PRO_0000033157" evidence="2">
    <location>
        <begin position="26"/>
        <end position="93"/>
    </location>
</feature>
<feature type="peptide" id="PRO_0000033158" description="Cortistatin-14">
    <location>
        <begin position="96"/>
        <end position="109"/>
    </location>
</feature>
<feature type="region of interest" description="Disordered" evidence="3">
    <location>
        <begin position="64"/>
        <end position="97"/>
    </location>
</feature>
<feature type="disulfide bond" evidence="1">
    <location>
        <begin position="97"/>
        <end position="108"/>
    </location>
</feature>
<feature type="sequence conflict" description="In Ref. 2; AAD51127." evidence="5" ref="2">
    <location>
        <position position="40"/>
    </location>
</feature>
<feature type="sequence conflict" description="In Ref. 2; AAD51127." evidence="5" ref="2">
    <location>
        <begin position="57"/>
        <end position="59"/>
    </location>
</feature>
<name>CORT_MOUSE</name>
<organism>
    <name type="scientific">Mus musculus</name>
    <name type="common">Mouse</name>
    <dbReference type="NCBI Taxonomy" id="10090"/>
    <lineage>
        <taxon>Eukaryota</taxon>
        <taxon>Metazoa</taxon>
        <taxon>Chordata</taxon>
        <taxon>Craniata</taxon>
        <taxon>Vertebrata</taxon>
        <taxon>Euteleostomi</taxon>
        <taxon>Mammalia</taxon>
        <taxon>Eutheria</taxon>
        <taxon>Euarchontoglires</taxon>
        <taxon>Glires</taxon>
        <taxon>Rodentia</taxon>
        <taxon>Myomorpha</taxon>
        <taxon>Muroidea</taxon>
        <taxon>Muridae</taxon>
        <taxon>Murinae</taxon>
        <taxon>Mus</taxon>
        <taxon>Mus</taxon>
    </lineage>
</organism>
<keyword id="KW-0165">Cleavage on pair of basic residues</keyword>
<keyword id="KW-1015">Disulfide bond</keyword>
<keyword id="KW-0372">Hormone</keyword>
<keyword id="KW-1185">Reference proteome</keyword>
<keyword id="KW-0964">Secreted</keyword>
<keyword id="KW-0732">Signal</keyword>
<accession>P56469</accession>
<accession>A2AH76</accession>
<accession>Q9R1P8</accession>
<proteinExistence type="evidence at transcript level"/>
<gene>
    <name type="primary">Cort</name>
</gene>
<reference key="1">
    <citation type="journal article" date="1997" name="Genomics">
        <title>Cloning, mRNA expression, and chromosomal mapping of mouse and human preprocortistatin.</title>
        <authorList>
            <person name="de Lecea L."/>
            <person name="Ruiz-Lozano P."/>
            <person name="Danielson P.E."/>
            <person name="Peelle-Kirley J."/>
            <person name="Foye P.E."/>
            <person name="Frankel W.N."/>
            <person name="Sutcliffe J.G."/>
        </authorList>
    </citation>
    <scope>NUCLEOTIDE SEQUENCE [MRNA]</scope>
    <source>
        <strain>C57BL/6J</strain>
    </source>
</reference>
<reference key="2">
    <citation type="journal article" date="1999" name="Brain Res. Mol. Brain Res.">
        <title>Cortistatin and somatostatin mRNAs are differentially regulated in response to kainate.</title>
        <authorList>
            <person name="Calbet M."/>
            <person name="Guadano-Ferraz A."/>
            <person name="Spier A.D."/>
            <person name="Maj M."/>
            <person name="Sutcliffe J.G."/>
            <person name="Przewlocki R."/>
            <person name="de Lecea L."/>
        </authorList>
    </citation>
    <scope>NUCLEOTIDE SEQUENCE [GENOMIC DNA]</scope>
    <scope>INDUCTION</scope>
    <source>
        <strain>129/Sv</strain>
    </source>
</reference>
<reference key="3">
    <citation type="journal article" date="2005" name="Science">
        <title>The transcriptional landscape of the mammalian genome.</title>
        <authorList>
            <person name="Carninci P."/>
            <person name="Kasukawa T."/>
            <person name="Katayama S."/>
            <person name="Gough J."/>
            <person name="Frith M.C."/>
            <person name="Maeda N."/>
            <person name="Oyama R."/>
            <person name="Ravasi T."/>
            <person name="Lenhard B."/>
            <person name="Wells C."/>
            <person name="Kodzius R."/>
            <person name="Shimokawa K."/>
            <person name="Bajic V.B."/>
            <person name="Brenner S.E."/>
            <person name="Batalov S."/>
            <person name="Forrest A.R."/>
            <person name="Zavolan M."/>
            <person name="Davis M.J."/>
            <person name="Wilming L.G."/>
            <person name="Aidinis V."/>
            <person name="Allen J.E."/>
            <person name="Ambesi-Impiombato A."/>
            <person name="Apweiler R."/>
            <person name="Aturaliya R.N."/>
            <person name="Bailey T.L."/>
            <person name="Bansal M."/>
            <person name="Baxter L."/>
            <person name="Beisel K.W."/>
            <person name="Bersano T."/>
            <person name="Bono H."/>
            <person name="Chalk A.M."/>
            <person name="Chiu K.P."/>
            <person name="Choudhary V."/>
            <person name="Christoffels A."/>
            <person name="Clutterbuck D.R."/>
            <person name="Crowe M.L."/>
            <person name="Dalla E."/>
            <person name="Dalrymple B.P."/>
            <person name="de Bono B."/>
            <person name="Della Gatta G."/>
            <person name="di Bernardo D."/>
            <person name="Down T."/>
            <person name="Engstrom P."/>
            <person name="Fagiolini M."/>
            <person name="Faulkner G."/>
            <person name="Fletcher C.F."/>
            <person name="Fukushima T."/>
            <person name="Furuno M."/>
            <person name="Futaki S."/>
            <person name="Gariboldi M."/>
            <person name="Georgii-Hemming P."/>
            <person name="Gingeras T.R."/>
            <person name="Gojobori T."/>
            <person name="Green R.E."/>
            <person name="Gustincich S."/>
            <person name="Harbers M."/>
            <person name="Hayashi Y."/>
            <person name="Hensch T.K."/>
            <person name="Hirokawa N."/>
            <person name="Hill D."/>
            <person name="Huminiecki L."/>
            <person name="Iacono M."/>
            <person name="Ikeo K."/>
            <person name="Iwama A."/>
            <person name="Ishikawa T."/>
            <person name="Jakt M."/>
            <person name="Kanapin A."/>
            <person name="Katoh M."/>
            <person name="Kawasawa Y."/>
            <person name="Kelso J."/>
            <person name="Kitamura H."/>
            <person name="Kitano H."/>
            <person name="Kollias G."/>
            <person name="Krishnan S.P."/>
            <person name="Kruger A."/>
            <person name="Kummerfeld S.K."/>
            <person name="Kurochkin I.V."/>
            <person name="Lareau L.F."/>
            <person name="Lazarevic D."/>
            <person name="Lipovich L."/>
            <person name="Liu J."/>
            <person name="Liuni S."/>
            <person name="McWilliam S."/>
            <person name="Madan Babu M."/>
            <person name="Madera M."/>
            <person name="Marchionni L."/>
            <person name="Matsuda H."/>
            <person name="Matsuzawa S."/>
            <person name="Miki H."/>
            <person name="Mignone F."/>
            <person name="Miyake S."/>
            <person name="Morris K."/>
            <person name="Mottagui-Tabar S."/>
            <person name="Mulder N."/>
            <person name="Nakano N."/>
            <person name="Nakauchi H."/>
            <person name="Ng P."/>
            <person name="Nilsson R."/>
            <person name="Nishiguchi S."/>
            <person name="Nishikawa S."/>
            <person name="Nori F."/>
            <person name="Ohara O."/>
            <person name="Okazaki Y."/>
            <person name="Orlando V."/>
            <person name="Pang K.C."/>
            <person name="Pavan W.J."/>
            <person name="Pavesi G."/>
            <person name="Pesole G."/>
            <person name="Petrovsky N."/>
            <person name="Piazza S."/>
            <person name="Reed J."/>
            <person name="Reid J.F."/>
            <person name="Ring B.Z."/>
            <person name="Ringwald M."/>
            <person name="Rost B."/>
            <person name="Ruan Y."/>
            <person name="Salzberg S.L."/>
            <person name="Sandelin A."/>
            <person name="Schneider C."/>
            <person name="Schoenbach C."/>
            <person name="Sekiguchi K."/>
            <person name="Semple C.A."/>
            <person name="Seno S."/>
            <person name="Sessa L."/>
            <person name="Sheng Y."/>
            <person name="Shibata Y."/>
            <person name="Shimada H."/>
            <person name="Shimada K."/>
            <person name="Silva D."/>
            <person name="Sinclair B."/>
            <person name="Sperling S."/>
            <person name="Stupka E."/>
            <person name="Sugiura K."/>
            <person name="Sultana R."/>
            <person name="Takenaka Y."/>
            <person name="Taki K."/>
            <person name="Tammoja K."/>
            <person name="Tan S.L."/>
            <person name="Tang S."/>
            <person name="Taylor M.S."/>
            <person name="Tegner J."/>
            <person name="Teichmann S.A."/>
            <person name="Ueda H.R."/>
            <person name="van Nimwegen E."/>
            <person name="Verardo R."/>
            <person name="Wei C.L."/>
            <person name="Yagi K."/>
            <person name="Yamanishi H."/>
            <person name="Zabarovsky E."/>
            <person name="Zhu S."/>
            <person name="Zimmer A."/>
            <person name="Hide W."/>
            <person name="Bult C."/>
            <person name="Grimmond S.M."/>
            <person name="Teasdale R.D."/>
            <person name="Liu E.T."/>
            <person name="Brusic V."/>
            <person name="Quackenbush J."/>
            <person name="Wahlestedt C."/>
            <person name="Mattick J.S."/>
            <person name="Hume D.A."/>
            <person name="Kai C."/>
            <person name="Sasaki D."/>
            <person name="Tomaru Y."/>
            <person name="Fukuda S."/>
            <person name="Kanamori-Katayama M."/>
            <person name="Suzuki M."/>
            <person name="Aoki J."/>
            <person name="Arakawa T."/>
            <person name="Iida J."/>
            <person name="Imamura K."/>
            <person name="Itoh M."/>
            <person name="Kato T."/>
            <person name="Kawaji H."/>
            <person name="Kawagashira N."/>
            <person name="Kawashima T."/>
            <person name="Kojima M."/>
            <person name="Kondo S."/>
            <person name="Konno H."/>
            <person name="Nakano K."/>
            <person name="Ninomiya N."/>
            <person name="Nishio T."/>
            <person name="Okada M."/>
            <person name="Plessy C."/>
            <person name="Shibata K."/>
            <person name="Shiraki T."/>
            <person name="Suzuki S."/>
            <person name="Tagami M."/>
            <person name="Waki K."/>
            <person name="Watahiki A."/>
            <person name="Okamura-Oho Y."/>
            <person name="Suzuki H."/>
            <person name="Kawai J."/>
            <person name="Hayashizaki Y."/>
        </authorList>
    </citation>
    <scope>NUCLEOTIDE SEQUENCE [LARGE SCALE MRNA]</scope>
    <source>
        <strain>C57BL/6J</strain>
        <tissue>Hippocampus</tissue>
    </source>
</reference>
<reference key="4">
    <citation type="journal article" date="2009" name="PLoS Biol.">
        <title>Lineage-specific biology revealed by a finished genome assembly of the mouse.</title>
        <authorList>
            <person name="Church D.M."/>
            <person name="Goodstadt L."/>
            <person name="Hillier L.W."/>
            <person name="Zody M.C."/>
            <person name="Goldstein S."/>
            <person name="She X."/>
            <person name="Bult C.J."/>
            <person name="Agarwala R."/>
            <person name="Cherry J.L."/>
            <person name="DiCuccio M."/>
            <person name="Hlavina W."/>
            <person name="Kapustin Y."/>
            <person name="Meric P."/>
            <person name="Maglott D."/>
            <person name="Birtle Z."/>
            <person name="Marques A.C."/>
            <person name="Graves T."/>
            <person name="Zhou S."/>
            <person name="Teague B."/>
            <person name="Potamousis K."/>
            <person name="Churas C."/>
            <person name="Place M."/>
            <person name="Herschleb J."/>
            <person name="Runnheim R."/>
            <person name="Forrest D."/>
            <person name="Amos-Landgraf J."/>
            <person name="Schwartz D.C."/>
            <person name="Cheng Z."/>
            <person name="Lindblad-Toh K."/>
            <person name="Eichler E.E."/>
            <person name="Ponting C.P."/>
        </authorList>
    </citation>
    <scope>NUCLEOTIDE SEQUENCE [LARGE SCALE GENOMIC DNA]</scope>
    <source>
        <strain>C57BL/6J</strain>
    </source>
</reference>
<evidence type="ECO:0000250" key="1"/>
<evidence type="ECO:0000255" key="2"/>
<evidence type="ECO:0000256" key="3">
    <source>
        <dbReference type="SAM" id="MobiDB-lite"/>
    </source>
</evidence>
<evidence type="ECO:0000269" key="4">
    <source>
    </source>
</evidence>
<evidence type="ECO:0000305" key="5"/>
<dbReference type="EMBL" id="AF013253">
    <property type="protein sequence ID" value="AAB66896.1"/>
    <property type="molecule type" value="mRNA"/>
</dbReference>
<dbReference type="EMBL" id="AF050156">
    <property type="protein sequence ID" value="AAD51127.1"/>
    <property type="molecule type" value="Genomic_DNA"/>
</dbReference>
<dbReference type="EMBL" id="AK013496">
    <property type="protein sequence ID" value="BAB28882.1"/>
    <property type="molecule type" value="mRNA"/>
</dbReference>
<dbReference type="EMBL" id="AL731655">
    <property type="status" value="NOT_ANNOTATED_CDS"/>
    <property type="molecule type" value="Genomic_DNA"/>
</dbReference>
<dbReference type="CCDS" id="CCDS18953.1"/>
<dbReference type="RefSeq" id="NP_031771.1">
    <property type="nucleotide sequence ID" value="NM_007745.5"/>
</dbReference>
<dbReference type="FunCoup" id="P56469">
    <property type="interactions" value="639"/>
</dbReference>
<dbReference type="STRING" id="10090.ENSMUSP00000030815"/>
<dbReference type="GlyGen" id="P56469">
    <property type="glycosylation" value="1 site"/>
</dbReference>
<dbReference type="PhosphoSitePlus" id="P56469"/>
<dbReference type="PaxDb" id="10090-ENSMUSP00000030815"/>
<dbReference type="Antibodypedia" id="57276">
    <property type="antibodies" value="52 antibodies from 11 providers"/>
</dbReference>
<dbReference type="DNASU" id="12854"/>
<dbReference type="Ensembl" id="ENSMUST00000030815.3">
    <property type="protein sequence ID" value="ENSMUSP00000030815.3"/>
    <property type="gene ID" value="ENSMUSG00000028971.5"/>
</dbReference>
<dbReference type="GeneID" id="12854"/>
<dbReference type="KEGG" id="mmu:12854"/>
<dbReference type="UCSC" id="uc008vvs.1">
    <property type="organism name" value="mouse"/>
</dbReference>
<dbReference type="AGR" id="MGI:109538"/>
<dbReference type="CTD" id="1325"/>
<dbReference type="MGI" id="MGI:109538">
    <property type="gene designation" value="Cort"/>
</dbReference>
<dbReference type="VEuPathDB" id="HostDB:ENSMUSG00000028971"/>
<dbReference type="eggNOG" id="ENOG502S1NT">
    <property type="taxonomic scope" value="Eukaryota"/>
</dbReference>
<dbReference type="GeneTree" id="ENSGT00730000111752"/>
<dbReference type="HOGENOM" id="CLU_124515_0_0_1"/>
<dbReference type="InParanoid" id="P56469"/>
<dbReference type="OMA" id="TRCKNFF"/>
<dbReference type="OrthoDB" id="9438385at2759"/>
<dbReference type="PhylomeDB" id="P56469"/>
<dbReference type="Reactome" id="R-MMU-375276">
    <property type="pathway name" value="Peptide ligand-binding receptors"/>
</dbReference>
<dbReference type="Reactome" id="R-MMU-418594">
    <property type="pathway name" value="G alpha (i) signalling events"/>
</dbReference>
<dbReference type="BioGRID-ORCS" id="12854">
    <property type="hits" value="2 hits in 75 CRISPR screens"/>
</dbReference>
<dbReference type="PRO" id="PR:P56469"/>
<dbReference type="Proteomes" id="UP000000589">
    <property type="component" value="Chromosome 4"/>
</dbReference>
<dbReference type="RNAct" id="P56469">
    <property type="molecule type" value="protein"/>
</dbReference>
<dbReference type="Bgee" id="ENSMUSG00000028971">
    <property type="expression patterns" value="Expressed in embryonic brain and 67 other cell types or tissues"/>
</dbReference>
<dbReference type="GO" id="GO:0005576">
    <property type="term" value="C:extracellular region"/>
    <property type="evidence" value="ECO:0007669"/>
    <property type="project" value="UniProtKB-SubCell"/>
</dbReference>
<dbReference type="GO" id="GO:0001664">
    <property type="term" value="F:G protein-coupled receptor binding"/>
    <property type="evidence" value="ECO:0007669"/>
    <property type="project" value="Ensembl"/>
</dbReference>
<dbReference type="GO" id="GO:0005184">
    <property type="term" value="F:neuropeptide hormone activity"/>
    <property type="evidence" value="ECO:0007669"/>
    <property type="project" value="Ensembl"/>
</dbReference>
<dbReference type="GO" id="GO:0007193">
    <property type="term" value="P:adenylate cyclase-inhibiting G protein-coupled receptor signaling pathway"/>
    <property type="evidence" value="ECO:0007669"/>
    <property type="project" value="Ensembl"/>
</dbReference>
<dbReference type="InterPro" id="IPR004250">
    <property type="entry name" value="Somatostatin"/>
</dbReference>
<dbReference type="InterPro" id="IPR018142">
    <property type="entry name" value="Somatostatin/Cortistatin_C"/>
</dbReference>
<dbReference type="PANTHER" id="PTHR10558:SF1">
    <property type="entry name" value="CORTISTATIN"/>
    <property type="match status" value="1"/>
</dbReference>
<dbReference type="PANTHER" id="PTHR10558">
    <property type="entry name" value="SOMATOSTATIN"/>
    <property type="match status" value="1"/>
</dbReference>
<dbReference type="Pfam" id="PF03002">
    <property type="entry name" value="Somatostatin"/>
    <property type="match status" value="1"/>
</dbReference>
<dbReference type="PIRSF" id="PIRSF001814">
    <property type="entry name" value="Somatostatin"/>
    <property type="match status" value="1"/>
</dbReference>
<comment type="subcellular location">
    <subcellularLocation>
        <location>Secreted</location>
    </subcellularLocation>
</comment>
<comment type="tissue specificity">
    <text>Expressed in a subset of GABAergic cells in the cortex and hippocampus.</text>
</comment>
<comment type="induction">
    <text evidence="4">Not induced by kainate.</text>
</comment>
<comment type="similarity">
    <text evidence="5">Belongs to the somatostatin family.</text>
</comment>